<reference key="1">
    <citation type="journal article" date="2007" name="Proc. Natl. Acad. Sci. U.S.A.">
        <title>Genome sequencing reveals complex secondary metabolome in the marine actinomycete Salinispora tropica.</title>
        <authorList>
            <person name="Udwary D.W."/>
            <person name="Zeigler L."/>
            <person name="Asolkar R.N."/>
            <person name="Singan V."/>
            <person name="Lapidus A."/>
            <person name="Fenical W."/>
            <person name="Jensen P.R."/>
            <person name="Moore B.S."/>
        </authorList>
    </citation>
    <scope>NUCLEOTIDE SEQUENCE [LARGE SCALE GENOMIC DNA]</scope>
    <source>
        <strain>ATCC BAA-916 / DSM 44818 / JCM 13857 / NBRC 105044 / CNB-440</strain>
    </source>
</reference>
<sequence length="241" mass="25455">MARPDGRLPDHLRPVTLTRGWSTHPEGSVLVEFGATRVLCTASVTEGVPRWRKGSGLGWVTAEYAMLPRATNTRSDRESVKGRVGGRTHEISRLIGRSLRASIDLKALGENSIVLDCDVLQADGGTRTAAITGAYVALHDAVTWLAARRSLAGRPETVMHRSVAAVSVGVVAGEPRLDLNYAEDASAEVDLNVVCTGAGDFVEVQGTGEAGVFSRGQLDALLDLAVAGCVELAEAQRKALS</sequence>
<keyword id="KW-0548">Nucleotidyltransferase</keyword>
<keyword id="KW-1185">Reference proteome</keyword>
<keyword id="KW-0694">RNA-binding</keyword>
<keyword id="KW-0698">rRNA processing</keyword>
<keyword id="KW-0808">Transferase</keyword>
<keyword id="KW-0819">tRNA processing</keyword>
<keyword id="KW-0820">tRNA-binding</keyword>
<evidence type="ECO:0000255" key="1">
    <source>
        <dbReference type="HAMAP-Rule" id="MF_00564"/>
    </source>
</evidence>
<protein>
    <recommendedName>
        <fullName evidence="1">Ribonuclease PH</fullName>
        <shortName evidence="1">RNase PH</shortName>
        <ecNumber evidence="1">2.7.7.56</ecNumber>
    </recommendedName>
    <alternativeName>
        <fullName evidence="1">tRNA nucleotidyltransferase</fullName>
    </alternativeName>
</protein>
<name>RNPH_SALTO</name>
<organism>
    <name type="scientific">Salinispora tropica (strain ATCC BAA-916 / DSM 44818 / JCM 13857 / NBRC 105044 / CNB-440)</name>
    <dbReference type="NCBI Taxonomy" id="369723"/>
    <lineage>
        <taxon>Bacteria</taxon>
        <taxon>Bacillati</taxon>
        <taxon>Actinomycetota</taxon>
        <taxon>Actinomycetes</taxon>
        <taxon>Micromonosporales</taxon>
        <taxon>Micromonosporaceae</taxon>
        <taxon>Salinispora</taxon>
    </lineage>
</organism>
<feature type="chain" id="PRO_1000082302" description="Ribonuclease PH">
    <location>
        <begin position="1"/>
        <end position="241"/>
    </location>
</feature>
<feature type="binding site" evidence="1">
    <location>
        <position position="87"/>
    </location>
    <ligand>
        <name>phosphate</name>
        <dbReference type="ChEBI" id="CHEBI:43474"/>
        <note>substrate</note>
    </ligand>
</feature>
<feature type="binding site" evidence="1">
    <location>
        <begin position="125"/>
        <end position="127"/>
    </location>
    <ligand>
        <name>phosphate</name>
        <dbReference type="ChEBI" id="CHEBI:43474"/>
        <note>substrate</note>
    </ligand>
</feature>
<dbReference type="EC" id="2.7.7.56" evidence="1"/>
<dbReference type="EMBL" id="CP000667">
    <property type="protein sequence ID" value="ABP53575.1"/>
    <property type="molecule type" value="Genomic_DNA"/>
</dbReference>
<dbReference type="RefSeq" id="WP_011905007.1">
    <property type="nucleotide sequence ID" value="NC_009380.1"/>
</dbReference>
<dbReference type="SMR" id="A4X3X5"/>
<dbReference type="STRING" id="369723.Strop_1104"/>
<dbReference type="KEGG" id="stp:Strop_1104"/>
<dbReference type="PATRIC" id="fig|369723.5.peg.1126"/>
<dbReference type="eggNOG" id="COG0689">
    <property type="taxonomic scope" value="Bacteria"/>
</dbReference>
<dbReference type="HOGENOM" id="CLU_050858_0_0_11"/>
<dbReference type="Proteomes" id="UP000000235">
    <property type="component" value="Chromosome"/>
</dbReference>
<dbReference type="GO" id="GO:0000175">
    <property type="term" value="F:3'-5'-RNA exonuclease activity"/>
    <property type="evidence" value="ECO:0007669"/>
    <property type="project" value="UniProtKB-UniRule"/>
</dbReference>
<dbReference type="GO" id="GO:0000049">
    <property type="term" value="F:tRNA binding"/>
    <property type="evidence" value="ECO:0007669"/>
    <property type="project" value="UniProtKB-UniRule"/>
</dbReference>
<dbReference type="GO" id="GO:0009022">
    <property type="term" value="F:tRNA nucleotidyltransferase activity"/>
    <property type="evidence" value="ECO:0007669"/>
    <property type="project" value="UniProtKB-UniRule"/>
</dbReference>
<dbReference type="GO" id="GO:0016075">
    <property type="term" value="P:rRNA catabolic process"/>
    <property type="evidence" value="ECO:0007669"/>
    <property type="project" value="UniProtKB-UniRule"/>
</dbReference>
<dbReference type="GO" id="GO:0006364">
    <property type="term" value="P:rRNA processing"/>
    <property type="evidence" value="ECO:0007669"/>
    <property type="project" value="UniProtKB-KW"/>
</dbReference>
<dbReference type="GO" id="GO:0008033">
    <property type="term" value="P:tRNA processing"/>
    <property type="evidence" value="ECO:0007669"/>
    <property type="project" value="UniProtKB-UniRule"/>
</dbReference>
<dbReference type="CDD" id="cd11362">
    <property type="entry name" value="RNase_PH_bact"/>
    <property type="match status" value="1"/>
</dbReference>
<dbReference type="FunFam" id="3.30.230.70:FF:000003">
    <property type="entry name" value="Ribonuclease PH"/>
    <property type="match status" value="1"/>
</dbReference>
<dbReference type="Gene3D" id="3.30.230.70">
    <property type="entry name" value="GHMP Kinase, N-terminal domain"/>
    <property type="match status" value="1"/>
</dbReference>
<dbReference type="HAMAP" id="MF_00564">
    <property type="entry name" value="RNase_PH"/>
    <property type="match status" value="1"/>
</dbReference>
<dbReference type="InterPro" id="IPR001247">
    <property type="entry name" value="ExoRNase_PH_dom1"/>
</dbReference>
<dbReference type="InterPro" id="IPR015847">
    <property type="entry name" value="ExoRNase_PH_dom2"/>
</dbReference>
<dbReference type="InterPro" id="IPR036345">
    <property type="entry name" value="ExoRNase_PH_dom2_sf"/>
</dbReference>
<dbReference type="InterPro" id="IPR027408">
    <property type="entry name" value="PNPase/RNase_PH_dom_sf"/>
</dbReference>
<dbReference type="InterPro" id="IPR020568">
    <property type="entry name" value="Ribosomal_Su5_D2-typ_SF"/>
</dbReference>
<dbReference type="InterPro" id="IPR050080">
    <property type="entry name" value="RNase_PH"/>
</dbReference>
<dbReference type="InterPro" id="IPR002381">
    <property type="entry name" value="RNase_PH_bac-type"/>
</dbReference>
<dbReference type="InterPro" id="IPR018336">
    <property type="entry name" value="RNase_PH_CS"/>
</dbReference>
<dbReference type="NCBIfam" id="TIGR01966">
    <property type="entry name" value="RNasePH"/>
    <property type="match status" value="1"/>
</dbReference>
<dbReference type="PANTHER" id="PTHR11953">
    <property type="entry name" value="EXOSOME COMPLEX COMPONENT"/>
    <property type="match status" value="1"/>
</dbReference>
<dbReference type="PANTHER" id="PTHR11953:SF0">
    <property type="entry name" value="EXOSOME COMPLEX COMPONENT RRP41"/>
    <property type="match status" value="1"/>
</dbReference>
<dbReference type="Pfam" id="PF01138">
    <property type="entry name" value="RNase_PH"/>
    <property type="match status" value="1"/>
</dbReference>
<dbReference type="Pfam" id="PF03725">
    <property type="entry name" value="RNase_PH_C"/>
    <property type="match status" value="1"/>
</dbReference>
<dbReference type="SUPFAM" id="SSF55666">
    <property type="entry name" value="Ribonuclease PH domain 2-like"/>
    <property type="match status" value="1"/>
</dbReference>
<dbReference type="SUPFAM" id="SSF54211">
    <property type="entry name" value="Ribosomal protein S5 domain 2-like"/>
    <property type="match status" value="1"/>
</dbReference>
<dbReference type="PROSITE" id="PS01277">
    <property type="entry name" value="RIBONUCLEASE_PH"/>
    <property type="match status" value="1"/>
</dbReference>
<gene>
    <name evidence="1" type="primary">rph</name>
    <name type="ordered locus">Strop_1104</name>
</gene>
<accession>A4X3X5</accession>
<proteinExistence type="inferred from homology"/>
<comment type="function">
    <text evidence="1">Phosphorolytic 3'-5' exoribonuclease that plays an important role in tRNA 3'-end maturation. Removes nucleotide residues following the 3'-CCA terminus of tRNAs; can also add nucleotides to the ends of RNA molecules by using nucleoside diphosphates as substrates, but this may not be physiologically important. Probably plays a role in initiation of 16S rRNA degradation (leading to ribosome degradation) during starvation.</text>
</comment>
<comment type="catalytic activity">
    <reaction evidence="1">
        <text>tRNA(n+1) + phosphate = tRNA(n) + a ribonucleoside 5'-diphosphate</text>
        <dbReference type="Rhea" id="RHEA:10628"/>
        <dbReference type="Rhea" id="RHEA-COMP:17343"/>
        <dbReference type="Rhea" id="RHEA-COMP:17344"/>
        <dbReference type="ChEBI" id="CHEBI:43474"/>
        <dbReference type="ChEBI" id="CHEBI:57930"/>
        <dbReference type="ChEBI" id="CHEBI:173114"/>
        <dbReference type="EC" id="2.7.7.56"/>
    </reaction>
</comment>
<comment type="subunit">
    <text evidence="1">Homohexameric ring arranged as a trimer of dimers.</text>
</comment>
<comment type="similarity">
    <text evidence="1">Belongs to the RNase PH family.</text>
</comment>